<name>NADE_HUMAN</name>
<protein>
    <recommendedName>
        <fullName>Glutamine-dependent NAD(+) synthetase</fullName>
        <ecNumber evidence="4 7">6.3.5.1</ecNumber>
    </recommendedName>
    <alternativeName>
        <fullName>NAD(+) synthase [glutamine-hydrolyzing]</fullName>
    </alternativeName>
    <alternativeName>
        <fullName>NAD(+) synthetase</fullName>
    </alternativeName>
</protein>
<gene>
    <name type="primary">NADSYN1</name>
</gene>
<evidence type="ECO:0000250" key="1"/>
<evidence type="ECO:0000250" key="2">
    <source>
        <dbReference type="UniProtKB" id="P9WJJ3"/>
    </source>
</evidence>
<evidence type="ECO:0000255" key="3">
    <source>
        <dbReference type="PROSITE-ProRule" id="PRU00054"/>
    </source>
</evidence>
<evidence type="ECO:0000269" key="4">
    <source>
    </source>
</evidence>
<evidence type="ECO:0000269" key="5">
    <source>
    </source>
</evidence>
<evidence type="ECO:0000269" key="6">
    <source>
    </source>
</evidence>
<evidence type="ECO:0000269" key="7">
    <source>
    </source>
</evidence>
<evidence type="ECO:0000269" key="8">
    <source ref="3"/>
</evidence>
<evidence type="ECO:0000303" key="9">
    <source>
    </source>
</evidence>
<evidence type="ECO:0000305" key="10"/>
<evidence type="ECO:0000305" key="11">
    <source>
    </source>
</evidence>
<evidence type="ECO:0000305" key="12">
    <source>
    </source>
</evidence>
<evidence type="ECO:0007829" key="13">
    <source>
        <dbReference type="PDB" id="6OFB"/>
    </source>
</evidence>
<proteinExistence type="evidence at protein level"/>
<sequence>MGRKVTVATCALNQWALDFEGNLQRILKSIEIAKNRGARYRLGPELEICGYGCWDHYYESDTLLHSFQVLAALVESPVTQDIICDVGMPVMHRNVRYNCRVIFLNRKILLIRPKMALANEGNYRELRWFTPWSRSRHTEEYFLPRMIQDLTKQETVPFGDAVLVTWDTCIGSEICEELWTPHSPHIDMGLDGVEIITNASGSHQVLRKANTRVDLVTMVTSKNGGIYLLANQKGCDGDRLYYDGCAMIAMNGSVFAQGSQFSLDDVEVLTATLDLEDVRSYRAEISSRNLAASRASPYPRVKVDFALSCHEDLLAPISEPIEWKYHSPEEEISLGPACWLWDFLRRSQQAGFLLPLSGGVDSAATACLIYSMCCQVCEAVRSGNEEVLADVRTIVNQISYTPQDPRDLCGRILTTCYMASKNSSQETCTRARELAQQIGSHHISLNIDPAVKAVMGIFSLVTGKSPLFAAHGGSSRENLALQNVQARIRMVLAYLFAQLSLWSRGVHGGLLVLGSANVDESLLGYLTKYDCSSADINPIGGISKTDLRAFVQFCIQRFQLPALQSILLAPATAELEPLADGQVSQTDEEDMGMTYAELSVYGKLRKVAKMGPYSMFCKLLGMWRHICTPRQVADKVKRFFSKYSMNRHKMTTLTPAYHAENYSPEDNRFDLRPFLYNTSWPWQFRCIENQVLQLERAEPQSLDGVD</sequence>
<comment type="function">
    <text evidence="4 7">Catalyzes the final step of the nicotinamide adenine dinucleotide (NAD) de novo synthesis pathway, the ATP-dependent amidation of deamido-NAD using L-glutamine as a nitrogen source.</text>
</comment>
<comment type="catalytic activity">
    <reaction evidence="4">
        <text>deamido-NAD(+) + L-glutamine + ATP + H2O = L-glutamate + AMP + diphosphate + NAD(+) + H(+)</text>
        <dbReference type="Rhea" id="RHEA:24384"/>
        <dbReference type="ChEBI" id="CHEBI:15377"/>
        <dbReference type="ChEBI" id="CHEBI:15378"/>
        <dbReference type="ChEBI" id="CHEBI:29985"/>
        <dbReference type="ChEBI" id="CHEBI:30616"/>
        <dbReference type="ChEBI" id="CHEBI:33019"/>
        <dbReference type="ChEBI" id="CHEBI:57540"/>
        <dbReference type="ChEBI" id="CHEBI:58359"/>
        <dbReference type="ChEBI" id="CHEBI:58437"/>
        <dbReference type="ChEBI" id="CHEBI:456215"/>
        <dbReference type="EC" id="6.3.5.1"/>
    </reaction>
    <physiologicalReaction direction="left-to-right" evidence="11 12">
        <dbReference type="Rhea" id="RHEA:24385"/>
    </physiologicalReaction>
</comment>
<comment type="biophysicochemical properties">
    <kinetics>
        <KM evidence="4">0.49 mM for deamido-NAD(+)</KM>
        <KM evidence="4">0.089 mM for ATP</KM>
        <KM evidence="4">1.44 mM for glutamine</KM>
        <KM evidence="4">13.1 mM for ammonium</KM>
        <Vmax evidence="4">0.99 nmol/min/ug enzyme deamido-NAD(+)</Vmax>
        <Vmax evidence="4">0.61 nmol/min/ug enzyme ATP</Vmax>
        <Vmax evidence="4">0.7 nmol/min/ug enzyme glutamine</Vmax>
        <Vmax evidence="4">1.04 nmol/min/ug enzyme ammonium</Vmax>
    </kinetics>
</comment>
<comment type="pathway">
    <text evidence="11">Cofactor biosynthesis; NAD(+) biosynthesis; NAD(+) from deamido-NAD(+) (L-Gln route): step 1/1.</text>
</comment>
<comment type="subunit">
    <text evidence="4">Homohexamer.</text>
</comment>
<comment type="interaction">
    <interactant intactId="EBI-748610">
        <id>Q6IA69</id>
    </interactant>
    <interactant intactId="EBI-11954519">
        <id>Q49AR9</id>
        <label>ANKS1A</label>
    </interactant>
    <organismsDiffer>false</organismsDiffer>
    <experiments>3</experiments>
</comment>
<comment type="interaction">
    <interactant intactId="EBI-748610">
        <id>Q6IA69</id>
    </interactant>
    <interactant intactId="EBI-747133">
        <id>P27658</id>
        <label>COL8A1</label>
    </interactant>
    <organismsDiffer>false</organismsDiffer>
    <experiments>3</experiments>
</comment>
<comment type="interaction">
    <interactant intactId="EBI-748610">
        <id>Q6IA69</id>
    </interactant>
    <interactant intactId="EBI-10192698">
        <id>Q02930-3</id>
        <label>CREB5</label>
    </interactant>
    <organismsDiffer>false</organismsDiffer>
    <experiments>3</experiments>
</comment>
<comment type="interaction">
    <interactant intactId="EBI-748610">
        <id>Q6IA69</id>
    </interactant>
    <interactant intactId="EBI-714918">
        <id>Q9NTM9</id>
        <label>CUTC</label>
    </interactant>
    <organismsDiffer>false</organismsDiffer>
    <experiments>4</experiments>
</comment>
<comment type="interaction">
    <interactant intactId="EBI-748610">
        <id>Q6IA69</id>
    </interactant>
    <interactant intactId="EBI-725515">
        <id>O43559</id>
        <label>FRS3</label>
    </interactant>
    <organismsDiffer>false</organismsDiffer>
    <experiments>3</experiments>
</comment>
<comment type="interaction">
    <interactant intactId="EBI-748610">
        <id>Q6IA69</id>
    </interactant>
    <interactant intactId="EBI-751540">
        <id>O95872</id>
        <label>GPANK1</label>
    </interactant>
    <organismsDiffer>false</organismsDiffer>
    <experiments>3</experiments>
</comment>
<comment type="interaction">
    <interactant intactId="EBI-748610">
        <id>Q6IA69</id>
    </interactant>
    <interactant intactId="EBI-740220">
        <id>O14964</id>
        <label>HGS</label>
    </interactant>
    <organismsDiffer>false</organismsDiffer>
    <experiments>3</experiments>
</comment>
<comment type="interaction">
    <interactant intactId="EBI-748610">
        <id>Q6IA69</id>
    </interactant>
    <interactant intactId="EBI-1752118">
        <id>P31273</id>
        <label>HOXC8</label>
    </interactant>
    <organismsDiffer>false</organismsDiffer>
    <experiments>3</experiments>
</comment>
<comment type="interaction">
    <interactant intactId="EBI-748610">
        <id>Q6IA69</id>
    </interactant>
    <interactant intactId="EBI-7950783">
        <id>Q96JP2</id>
        <label>MYO15B</label>
    </interactant>
    <organismsDiffer>false</organismsDiffer>
    <experiments>6</experiments>
</comment>
<comment type="interaction">
    <interactant intactId="EBI-748610">
        <id>Q6IA69</id>
    </interactant>
    <interactant intactId="EBI-12025760">
        <id>Q86UR1-2</id>
        <label>NOXA1</label>
    </interactant>
    <organismsDiffer>false</organismsDiffer>
    <experiments>3</experiments>
</comment>
<comment type="interaction">
    <interactant intactId="EBI-748610">
        <id>Q6IA69</id>
    </interactant>
    <interactant intactId="EBI-741158">
        <id>Q96HA8</id>
        <label>NTAQ1</label>
    </interactant>
    <organismsDiffer>false</organismsDiffer>
    <experiments>3</experiments>
</comment>
<comment type="interaction">
    <interactant intactId="EBI-748610">
        <id>Q6IA69</id>
    </interactant>
    <interactant intactId="EBI-357061">
        <id>Q92734</id>
        <label>TFG</label>
    </interactant>
    <organismsDiffer>false</organismsDiffer>
    <experiments>3</experiments>
</comment>
<comment type="interaction">
    <interactant intactId="EBI-748610">
        <id>Q6IA69</id>
    </interactant>
    <interactant intactId="EBI-10249899">
        <id>Q9H614</id>
    </interactant>
    <organismsDiffer>false</organismsDiffer>
    <experiments>3</experiments>
</comment>
<comment type="alternative products">
    <event type="alternative splicing"/>
    <isoform>
        <id>Q6IA69-1</id>
        <name>1</name>
        <sequence type="displayed"/>
    </isoform>
    <isoform>
        <id>Q6IA69-2</id>
        <name>2</name>
        <sequence type="described" ref="VSP_056585 VSP_056586"/>
    </isoform>
</comment>
<comment type="disease" evidence="7">
    <disease id="DI-05813">
        <name>Vertebral, cardiac, renal, and limb defects syndrome 3</name>
        <acronym>VCRL3</acronym>
        <description>An autosomal recessive, lethal disorder characterized by severe cardiac and renal anomalies, including hypoplastic or absent left ventricle, transposition of the great arteries, absent pulmonary trunk, and hypoplastic or absent kidneys. Patients also exhibit vertebral segmentation defects and shortening of the proximal long bones or micromelia. Death occurs in early infancy.</description>
        <dbReference type="MIM" id="618845"/>
    </disease>
    <text>The disease is caused by variants affecting the gene represented in this entry.</text>
</comment>
<comment type="similarity">
    <text evidence="10">In the C-terminal section; belongs to the NAD synthetase family.</text>
</comment>
<organism>
    <name type="scientific">Homo sapiens</name>
    <name type="common">Human</name>
    <dbReference type="NCBI Taxonomy" id="9606"/>
    <lineage>
        <taxon>Eukaryota</taxon>
        <taxon>Metazoa</taxon>
        <taxon>Chordata</taxon>
        <taxon>Craniata</taxon>
        <taxon>Vertebrata</taxon>
        <taxon>Euteleostomi</taxon>
        <taxon>Mammalia</taxon>
        <taxon>Eutheria</taxon>
        <taxon>Euarchontoglires</taxon>
        <taxon>Primates</taxon>
        <taxon>Haplorrhini</taxon>
        <taxon>Catarrhini</taxon>
        <taxon>Hominidae</taxon>
        <taxon>Homo</taxon>
    </lineage>
</organism>
<reference key="1">
    <citation type="journal article" date="2003" name="J. Biol. Chem.">
        <title>Molecular identification of human glutamine- and ammonia-dependent NAD synthetases. Carbon-nitrogen hydrolase domain confers glutamine dependency.</title>
        <authorList>
            <person name="Hara N."/>
            <person name="Yamada K."/>
            <person name="Terashima M."/>
            <person name="Osago H."/>
            <person name="Shimoyama M."/>
            <person name="Tsuchiya M."/>
        </authorList>
    </citation>
    <scope>NUCLEOTIDE SEQUENCE [MRNA] (ISOFORM 1)</scope>
    <scope>FUNCTION</scope>
    <scope>CATALYTIC ACTIVITY</scope>
    <scope>SUBUNIT</scope>
    <scope>MUTAGENESIS OF CYS-175</scope>
    <scope>BIOPHYSICOCHEMICAL PROPERTIES</scope>
    <scope>VARIANT HIS-204</scope>
    <source>
        <tissue>Brain</tissue>
    </source>
</reference>
<reference key="2">
    <citation type="journal article" date="2004" name="Nat. Genet.">
        <title>Complete sequencing and characterization of 21,243 full-length human cDNAs.</title>
        <authorList>
            <person name="Ota T."/>
            <person name="Suzuki Y."/>
            <person name="Nishikawa T."/>
            <person name="Otsuki T."/>
            <person name="Sugiyama T."/>
            <person name="Irie R."/>
            <person name="Wakamatsu A."/>
            <person name="Hayashi K."/>
            <person name="Sato H."/>
            <person name="Nagai K."/>
            <person name="Kimura K."/>
            <person name="Makita H."/>
            <person name="Sekine M."/>
            <person name="Obayashi M."/>
            <person name="Nishi T."/>
            <person name="Shibahara T."/>
            <person name="Tanaka T."/>
            <person name="Ishii S."/>
            <person name="Yamamoto J."/>
            <person name="Saito K."/>
            <person name="Kawai Y."/>
            <person name="Isono Y."/>
            <person name="Nakamura Y."/>
            <person name="Nagahari K."/>
            <person name="Murakami K."/>
            <person name="Yasuda T."/>
            <person name="Iwayanagi T."/>
            <person name="Wagatsuma M."/>
            <person name="Shiratori A."/>
            <person name="Sudo H."/>
            <person name="Hosoiri T."/>
            <person name="Kaku Y."/>
            <person name="Kodaira H."/>
            <person name="Kondo H."/>
            <person name="Sugawara M."/>
            <person name="Takahashi M."/>
            <person name="Kanda K."/>
            <person name="Yokoi T."/>
            <person name="Furuya T."/>
            <person name="Kikkawa E."/>
            <person name="Omura Y."/>
            <person name="Abe K."/>
            <person name="Kamihara K."/>
            <person name="Katsuta N."/>
            <person name="Sato K."/>
            <person name="Tanikawa M."/>
            <person name="Yamazaki M."/>
            <person name="Ninomiya K."/>
            <person name="Ishibashi T."/>
            <person name="Yamashita H."/>
            <person name="Murakawa K."/>
            <person name="Fujimori K."/>
            <person name="Tanai H."/>
            <person name="Kimata M."/>
            <person name="Watanabe M."/>
            <person name="Hiraoka S."/>
            <person name="Chiba Y."/>
            <person name="Ishida S."/>
            <person name="Ono Y."/>
            <person name="Takiguchi S."/>
            <person name="Watanabe S."/>
            <person name="Yosida M."/>
            <person name="Hotuta T."/>
            <person name="Kusano J."/>
            <person name="Kanehori K."/>
            <person name="Takahashi-Fujii A."/>
            <person name="Hara H."/>
            <person name="Tanase T.-O."/>
            <person name="Nomura Y."/>
            <person name="Togiya S."/>
            <person name="Komai F."/>
            <person name="Hara R."/>
            <person name="Takeuchi K."/>
            <person name="Arita M."/>
            <person name="Imose N."/>
            <person name="Musashino K."/>
            <person name="Yuuki H."/>
            <person name="Oshima A."/>
            <person name="Sasaki N."/>
            <person name="Aotsuka S."/>
            <person name="Yoshikawa Y."/>
            <person name="Matsunawa H."/>
            <person name="Ichihara T."/>
            <person name="Shiohata N."/>
            <person name="Sano S."/>
            <person name="Moriya S."/>
            <person name="Momiyama H."/>
            <person name="Satoh N."/>
            <person name="Takami S."/>
            <person name="Terashima Y."/>
            <person name="Suzuki O."/>
            <person name="Nakagawa S."/>
            <person name="Senoh A."/>
            <person name="Mizoguchi H."/>
            <person name="Goto Y."/>
            <person name="Shimizu F."/>
            <person name="Wakebe H."/>
            <person name="Hishigaki H."/>
            <person name="Watanabe T."/>
            <person name="Sugiyama A."/>
            <person name="Takemoto M."/>
            <person name="Kawakami B."/>
            <person name="Yamazaki M."/>
            <person name="Watanabe K."/>
            <person name="Kumagai A."/>
            <person name="Itakura S."/>
            <person name="Fukuzumi Y."/>
            <person name="Fujimori Y."/>
            <person name="Komiyama M."/>
            <person name="Tashiro H."/>
            <person name="Tanigami A."/>
            <person name="Fujiwara T."/>
            <person name="Ono T."/>
            <person name="Yamada K."/>
            <person name="Fujii Y."/>
            <person name="Ozaki K."/>
            <person name="Hirao M."/>
            <person name="Ohmori Y."/>
            <person name="Kawabata A."/>
            <person name="Hikiji T."/>
            <person name="Kobatake N."/>
            <person name="Inagaki H."/>
            <person name="Ikema Y."/>
            <person name="Okamoto S."/>
            <person name="Okitani R."/>
            <person name="Kawakami T."/>
            <person name="Noguchi S."/>
            <person name="Itoh T."/>
            <person name="Shigeta K."/>
            <person name="Senba T."/>
            <person name="Matsumura K."/>
            <person name="Nakajima Y."/>
            <person name="Mizuno T."/>
            <person name="Morinaga M."/>
            <person name="Sasaki M."/>
            <person name="Togashi T."/>
            <person name="Oyama M."/>
            <person name="Hata H."/>
            <person name="Watanabe M."/>
            <person name="Komatsu T."/>
            <person name="Mizushima-Sugano J."/>
            <person name="Satoh T."/>
            <person name="Shirai Y."/>
            <person name="Takahashi Y."/>
            <person name="Nakagawa K."/>
            <person name="Okumura K."/>
            <person name="Nagase T."/>
            <person name="Nomura N."/>
            <person name="Kikuchi H."/>
            <person name="Masuho Y."/>
            <person name="Yamashita R."/>
            <person name="Nakai K."/>
            <person name="Yada T."/>
            <person name="Nakamura Y."/>
            <person name="Ohara O."/>
            <person name="Isogai T."/>
            <person name="Sugano S."/>
        </authorList>
    </citation>
    <scope>NUCLEOTIDE SEQUENCE [LARGE SCALE MRNA] (ISOFORMS 1 AND 2)</scope>
    <scope>VARIANTS LEU-74 AND HIS-204</scope>
    <source>
        <tissue>Mammary gland</tissue>
        <tissue>Thymus</tissue>
    </source>
</reference>
<reference key="3">
    <citation type="submission" date="2004-06" db="EMBL/GenBank/DDBJ databases">
        <title>Cloning of human full open reading frames in Gateway(TM) system entry vector (pDONR201).</title>
        <authorList>
            <person name="Ebert L."/>
            <person name="Schick M."/>
            <person name="Neubert P."/>
            <person name="Schatten R."/>
            <person name="Henze S."/>
            <person name="Korn B."/>
        </authorList>
    </citation>
    <scope>NUCLEOTIDE SEQUENCE [LARGE SCALE MRNA] (ISOFORM 1)</scope>
    <scope>VARIANTS LEU-74 AND HIS-204</scope>
</reference>
<reference key="4">
    <citation type="journal article" date="2006" name="Nature">
        <title>Human chromosome 11 DNA sequence and analysis including novel gene identification.</title>
        <authorList>
            <person name="Taylor T.D."/>
            <person name="Noguchi H."/>
            <person name="Totoki Y."/>
            <person name="Toyoda A."/>
            <person name="Kuroki Y."/>
            <person name="Dewar K."/>
            <person name="Lloyd C."/>
            <person name="Itoh T."/>
            <person name="Takeda T."/>
            <person name="Kim D.-W."/>
            <person name="She X."/>
            <person name="Barlow K.F."/>
            <person name="Bloom T."/>
            <person name="Bruford E."/>
            <person name="Chang J.L."/>
            <person name="Cuomo C.A."/>
            <person name="Eichler E."/>
            <person name="FitzGerald M.G."/>
            <person name="Jaffe D.B."/>
            <person name="LaButti K."/>
            <person name="Nicol R."/>
            <person name="Park H.-S."/>
            <person name="Seaman C."/>
            <person name="Sougnez C."/>
            <person name="Yang X."/>
            <person name="Zimmer A.R."/>
            <person name="Zody M.C."/>
            <person name="Birren B.W."/>
            <person name="Nusbaum C."/>
            <person name="Fujiyama A."/>
            <person name="Hattori M."/>
            <person name="Rogers J."/>
            <person name="Lander E.S."/>
            <person name="Sakaki Y."/>
        </authorList>
    </citation>
    <scope>NUCLEOTIDE SEQUENCE [LARGE SCALE GENOMIC DNA]</scope>
</reference>
<reference key="5">
    <citation type="submission" date="2005-07" db="EMBL/GenBank/DDBJ databases">
        <authorList>
            <person name="Mural R.J."/>
            <person name="Istrail S."/>
            <person name="Sutton G."/>
            <person name="Florea L."/>
            <person name="Halpern A.L."/>
            <person name="Mobarry C.M."/>
            <person name="Lippert R."/>
            <person name="Walenz B."/>
            <person name="Shatkay H."/>
            <person name="Dew I."/>
            <person name="Miller J.R."/>
            <person name="Flanigan M.J."/>
            <person name="Edwards N.J."/>
            <person name="Bolanos R."/>
            <person name="Fasulo D."/>
            <person name="Halldorsson B.V."/>
            <person name="Hannenhalli S."/>
            <person name="Turner R."/>
            <person name="Yooseph S."/>
            <person name="Lu F."/>
            <person name="Nusskern D.R."/>
            <person name="Shue B.C."/>
            <person name="Zheng X.H."/>
            <person name="Zhong F."/>
            <person name="Delcher A.L."/>
            <person name="Huson D.H."/>
            <person name="Kravitz S.A."/>
            <person name="Mouchard L."/>
            <person name="Reinert K."/>
            <person name="Remington K.A."/>
            <person name="Clark A.G."/>
            <person name="Waterman M.S."/>
            <person name="Eichler E.E."/>
            <person name="Adams M.D."/>
            <person name="Hunkapiller M.W."/>
            <person name="Myers E.W."/>
            <person name="Venter J.C."/>
        </authorList>
    </citation>
    <scope>NUCLEOTIDE SEQUENCE [LARGE SCALE GENOMIC DNA]</scope>
</reference>
<reference key="6">
    <citation type="journal article" date="2004" name="Genome Res.">
        <title>The status, quality, and expansion of the NIH full-length cDNA project: the Mammalian Gene Collection (MGC).</title>
        <authorList>
            <consortium name="The MGC Project Team"/>
        </authorList>
    </citation>
    <scope>NUCLEOTIDE SEQUENCE [LARGE SCALE MRNA] (ISOFORM 1)</scope>
    <scope>VARIANTS LEU-74 AND HIS-204</scope>
    <source>
        <tissue>Lymph</tissue>
    </source>
</reference>
<reference key="7">
    <citation type="journal article" date="2011" name="BMC Syst. Biol.">
        <title>Initial characterization of the human central proteome.</title>
        <authorList>
            <person name="Burkard T.R."/>
            <person name="Planyavsky M."/>
            <person name="Kaupe I."/>
            <person name="Breitwieser F.P."/>
            <person name="Buerckstuemmer T."/>
            <person name="Bennett K.L."/>
            <person name="Superti-Furga G."/>
            <person name="Colinge J."/>
        </authorList>
    </citation>
    <scope>IDENTIFICATION BY MASS SPECTROMETRY [LARGE SCALE ANALYSIS]</scope>
</reference>
<reference key="8">
    <citation type="journal article" date="2020" name="Am. J. Hum. Genet.">
        <title>Bi-allelic mutations in NADSYN1 cause multiple organ defects and expand the genotypic spectrum of congenital NAD deficiency disorders.</title>
        <authorList>
            <person name="Szot J.O."/>
            <person name="Campagnolo C."/>
            <person name="Cao Y."/>
            <person name="Iyer K.R."/>
            <person name="Cuny H."/>
            <person name="Drysdale T."/>
            <person name="Flores-Daboub J.A."/>
            <person name="Bi W."/>
            <person name="Westerfield L."/>
            <person name="Liu P."/>
            <person name="Leung T.N."/>
            <person name="Choy K.W."/>
            <person name="Chapman G."/>
            <person name="Xiao R."/>
            <person name="Siu V.M."/>
            <person name="Dunwoodie S.L."/>
        </authorList>
    </citation>
    <scope>INVOLVEMENT IN VCRL3</scope>
    <scope>VARIANTS VCRL3 ARG-49; LEU-132; 245-CYS--ASP-706 DEL; THR-573 AND 613-TYR--ASP-706 DEL</scope>
    <scope>CHARACTERIZATION OF VARIANTS VCRL3 ARG-49; LEU-132 AND THR-573</scope>
    <scope>FUNCTION</scope>
    <scope>CATALYTIC ACTIVITY</scope>
</reference>
<feature type="chain" id="PRO_0000237577" description="Glutamine-dependent NAD(+) synthetase">
    <location>
        <begin position="1"/>
        <end position="706"/>
    </location>
</feature>
<feature type="domain" description="CN hydrolase" evidence="3">
    <location>
        <begin position="5"/>
        <end position="275"/>
    </location>
</feature>
<feature type="region of interest" description="Ligase" evidence="1">
    <location>
        <begin position="325"/>
        <end position="706"/>
    </location>
</feature>
<feature type="active site" description="Proton acceptor; for glutaminase activity" evidence="2">
    <location>
        <position position="45"/>
    </location>
</feature>
<feature type="active site" description="For glutaminase activity" evidence="2">
    <location>
        <position position="114"/>
    </location>
</feature>
<feature type="active site" description="Nucleophile; for glutaminase activity" evidence="2">
    <location>
        <position position="175"/>
    </location>
</feature>
<feature type="active site" evidence="1">
    <location>
        <position position="357"/>
    </location>
</feature>
<feature type="binding site" evidence="1">
    <location>
        <begin position="355"/>
        <end position="362"/>
    </location>
    <ligand>
        <name>ATP</name>
        <dbReference type="ChEBI" id="CHEBI:30616"/>
    </ligand>
</feature>
<feature type="splice variant" id="VSP_056585" description="In isoform 2." evidence="9">
    <original>MGRKVT</original>
    <variation>MGISGQ</variation>
    <location>
        <begin position="1"/>
        <end position="6"/>
    </location>
</feature>
<feature type="splice variant" id="VSP_056586" description="In isoform 2." evidence="9">
    <location>
        <begin position="7"/>
        <end position="266"/>
    </location>
</feature>
<feature type="sequence variant" id="VAR_084040" description="In VCRL3; loss of protein expression; dbSNP:rs769220327." evidence="7">
    <original>C</original>
    <variation>R</variation>
    <location>
        <position position="49"/>
    </location>
</feature>
<feature type="sequence variant" id="VAR_026497" description="In dbSNP:rs2276360." evidence="5 6 8">
    <original>V</original>
    <variation>L</variation>
    <location>
        <position position="74"/>
    </location>
</feature>
<feature type="sequence variant" id="VAR_084041" description="In VCRL3; decreased protein expression; decreased NAD(+) synthase (glutamine-hydrolyzing) activity; dbSNP:rs189928649." evidence="7">
    <original>W</original>
    <variation>L</variation>
    <location>
        <position position="132"/>
    </location>
</feature>
<feature type="sequence variant" id="VAR_058703" description="In dbSNP:rs7950441." evidence="4 5 6 8">
    <original>Q</original>
    <variation>H</variation>
    <location>
        <position position="204"/>
    </location>
</feature>
<feature type="sequence variant" id="VAR_084042" description="In VCRL3." evidence="7">
    <location>
        <begin position="245"/>
        <end position="706"/>
    </location>
</feature>
<feature type="sequence variant" id="VAR_056204" description="In dbSNP:rs7121106.">
    <original>P</original>
    <variation>L</variation>
    <location>
        <position position="297"/>
    </location>
</feature>
<feature type="sequence variant" id="VAR_084043" description="In VCRL3; no effect on protein expression; decreased NAD(+) synthase (glutamine-hydrolyzing) activity; dbSNP:rs144139747." evidence="7">
    <original>A</original>
    <variation>T</variation>
    <location>
        <position position="573"/>
    </location>
</feature>
<feature type="sequence variant" id="VAR_056205" description="In dbSNP:rs35007971.">
    <original>M</original>
    <variation>I</variation>
    <location>
        <position position="591"/>
    </location>
</feature>
<feature type="sequence variant" id="VAR_084044" description="In VCRL3." evidence="7">
    <location>
        <begin position="613"/>
        <end position="706"/>
    </location>
</feature>
<feature type="sequence variant" id="VAR_056206" description="In dbSNP:rs12282060.">
    <original>G</original>
    <variation>S</variation>
    <location>
        <position position="704"/>
    </location>
</feature>
<feature type="mutagenesis site" description="Eliminates glutamine-dependent NAD synthetase activity with the ammonia-dependent activity intact." evidence="4">
    <original>C</original>
    <variation>S</variation>
    <location>
        <position position="175"/>
    </location>
</feature>
<feature type="sequence conflict" description="In Ref. 1; BAC65148." evidence="10" ref="1">
    <original>I</original>
    <variation>V</variation>
    <location>
        <position position="102"/>
    </location>
</feature>
<feature type="sequence conflict" description="In Ref. 3; CAG33567." evidence="10" ref="3">
    <original>R</original>
    <variation>H</variation>
    <location>
        <position position="207"/>
    </location>
</feature>
<feature type="sequence conflict" description="In Ref. 1; BAC65148." evidence="10" ref="1">
    <original>W</original>
    <variation>R</variation>
    <location>
        <position position="623"/>
    </location>
</feature>
<feature type="strand" evidence="13">
    <location>
        <begin position="4"/>
        <end position="12"/>
    </location>
</feature>
<feature type="helix" evidence="13">
    <location>
        <begin position="19"/>
        <end position="35"/>
    </location>
</feature>
<feature type="strand" evidence="13">
    <location>
        <begin position="39"/>
        <end position="42"/>
    </location>
</feature>
<feature type="turn" evidence="13">
    <location>
        <begin position="45"/>
        <end position="49"/>
    </location>
</feature>
<feature type="helix" evidence="13">
    <location>
        <begin position="54"/>
        <end position="58"/>
    </location>
</feature>
<feature type="helix" evidence="13">
    <location>
        <begin position="60"/>
        <end position="74"/>
    </location>
</feature>
<feature type="helix" evidence="13">
    <location>
        <begin position="77"/>
        <end position="79"/>
    </location>
</feature>
<feature type="strand" evidence="13">
    <location>
        <begin position="82"/>
        <end position="92"/>
    </location>
</feature>
<feature type="strand" evidence="13">
    <location>
        <begin position="95"/>
        <end position="106"/>
    </location>
</feature>
<feature type="strand" evidence="13">
    <location>
        <begin position="108"/>
        <end position="113"/>
    </location>
</feature>
<feature type="helix" evidence="13">
    <location>
        <begin position="125"/>
        <end position="127"/>
    </location>
</feature>
<feature type="strand" evidence="13">
    <location>
        <begin position="138"/>
        <end position="142"/>
    </location>
</feature>
<feature type="helix" evidence="13">
    <location>
        <begin position="145"/>
        <end position="151"/>
    </location>
</feature>
<feature type="strand" evidence="13">
    <location>
        <begin position="154"/>
        <end position="160"/>
    </location>
</feature>
<feature type="strand" evidence="13">
    <location>
        <begin position="162"/>
        <end position="164"/>
    </location>
</feature>
<feature type="strand" evidence="13">
    <location>
        <begin position="169"/>
        <end position="172"/>
    </location>
</feature>
<feature type="helix" evidence="13">
    <location>
        <begin position="175"/>
        <end position="179"/>
    </location>
</feature>
<feature type="helix" evidence="13">
    <location>
        <begin position="184"/>
        <end position="191"/>
    </location>
</feature>
<feature type="strand" evidence="13">
    <location>
        <begin position="195"/>
        <end position="200"/>
    </location>
</feature>
<feature type="helix" evidence="13">
    <location>
        <begin position="209"/>
        <end position="223"/>
    </location>
</feature>
<feature type="strand" evidence="13">
    <location>
        <begin position="225"/>
        <end position="234"/>
    </location>
</feature>
<feature type="strand" evidence="13">
    <location>
        <begin position="236"/>
        <end position="239"/>
    </location>
</feature>
<feature type="strand" evidence="13">
    <location>
        <begin position="247"/>
        <end position="250"/>
    </location>
</feature>
<feature type="strand" evidence="13">
    <location>
        <begin position="253"/>
        <end position="257"/>
    </location>
</feature>
<feature type="strand" evidence="13">
    <location>
        <begin position="265"/>
        <end position="274"/>
    </location>
</feature>
<feature type="helix" evidence="13">
    <location>
        <begin position="275"/>
        <end position="286"/>
    </location>
</feature>
<feature type="strand" evidence="13">
    <location>
        <begin position="300"/>
        <end position="302"/>
    </location>
</feature>
<feature type="helix" evidence="13">
    <location>
        <begin position="311"/>
        <end position="313"/>
    </location>
</feature>
<feature type="helix" evidence="13">
    <location>
        <begin position="328"/>
        <end position="347"/>
    </location>
</feature>
<feature type="strand" evidence="13">
    <location>
        <begin position="351"/>
        <end position="355"/>
    </location>
</feature>
<feature type="helix" evidence="13">
    <location>
        <begin position="360"/>
        <end position="381"/>
    </location>
</feature>
<feature type="helix" evidence="13">
    <location>
        <begin position="385"/>
        <end position="395"/>
    </location>
</feature>
<feature type="helix" evidence="13">
    <location>
        <begin position="405"/>
        <end position="412"/>
    </location>
</feature>
<feature type="strand" evidence="13">
    <location>
        <begin position="413"/>
        <end position="419"/>
    </location>
</feature>
<feature type="helix" evidence="13">
    <location>
        <begin position="425"/>
        <end position="438"/>
    </location>
</feature>
<feature type="strand" evidence="13">
    <location>
        <begin position="441"/>
        <end position="446"/>
    </location>
</feature>
<feature type="helix" evidence="13">
    <location>
        <begin position="448"/>
        <end position="462"/>
    </location>
</feature>
<feature type="helix" evidence="13">
    <location>
        <begin position="469"/>
        <end position="471"/>
    </location>
</feature>
<feature type="helix" evidence="13">
    <location>
        <begin position="475"/>
        <end position="503"/>
    </location>
</feature>
<feature type="strand" evidence="13">
    <location>
        <begin position="510"/>
        <end position="513"/>
    </location>
</feature>
<feature type="helix" evidence="13">
    <location>
        <begin position="518"/>
        <end position="523"/>
    </location>
</feature>
<feature type="strand" evidence="13">
    <location>
        <begin position="535"/>
        <end position="539"/>
    </location>
</feature>
<feature type="helix" evidence="13">
    <location>
        <begin position="544"/>
        <end position="558"/>
    </location>
</feature>
<feature type="helix" evidence="13">
    <location>
        <begin position="563"/>
        <end position="568"/>
    </location>
</feature>
<feature type="helix" evidence="13">
    <location>
        <begin position="587"/>
        <end position="591"/>
    </location>
</feature>
<feature type="helix" evidence="13">
    <location>
        <begin position="595"/>
        <end position="606"/>
    </location>
</feature>
<feature type="helix" evidence="13">
    <location>
        <begin position="612"/>
        <end position="622"/>
    </location>
</feature>
<feature type="turn" evidence="13">
    <location>
        <begin position="623"/>
        <end position="626"/>
    </location>
</feature>
<feature type="helix" evidence="13">
    <location>
        <begin position="629"/>
        <end position="646"/>
    </location>
</feature>
<feature type="helix" evidence="13">
    <location>
        <begin position="648"/>
        <end position="651"/>
    </location>
</feature>
<feature type="turn" evidence="13">
    <location>
        <begin position="666"/>
        <end position="669"/>
    </location>
</feature>
<feature type="helix" evidence="13">
    <location>
        <begin position="681"/>
        <end position="694"/>
    </location>
</feature>
<dbReference type="EC" id="6.3.5.1" evidence="4 7"/>
<dbReference type="EMBL" id="AB091316">
    <property type="protein sequence ID" value="BAC65148.1"/>
    <property type="molecule type" value="mRNA"/>
</dbReference>
<dbReference type="EMBL" id="AK001493">
    <property type="protein sequence ID" value="BAA91722.1"/>
    <property type="molecule type" value="mRNA"/>
</dbReference>
<dbReference type="EMBL" id="AK022436">
    <property type="protein sequence ID" value="BAB14034.1"/>
    <property type="molecule type" value="mRNA"/>
</dbReference>
<dbReference type="EMBL" id="AK097946">
    <property type="protein sequence ID" value="BAG53556.1"/>
    <property type="molecule type" value="mRNA"/>
</dbReference>
<dbReference type="EMBL" id="CR457286">
    <property type="protein sequence ID" value="CAG33567.1"/>
    <property type="molecule type" value="mRNA"/>
</dbReference>
<dbReference type="EMBL" id="AP000867">
    <property type="status" value="NOT_ANNOTATED_CDS"/>
    <property type="molecule type" value="Genomic_DNA"/>
</dbReference>
<dbReference type="EMBL" id="AP002387">
    <property type="status" value="NOT_ANNOTATED_CDS"/>
    <property type="molecule type" value="Genomic_DNA"/>
</dbReference>
<dbReference type="EMBL" id="CH471076">
    <property type="protein sequence ID" value="EAW74792.1"/>
    <property type="molecule type" value="Genomic_DNA"/>
</dbReference>
<dbReference type="EMBL" id="BC003638">
    <property type="protein sequence ID" value="AAH03638.1"/>
    <property type="molecule type" value="mRNA"/>
</dbReference>
<dbReference type="EMBL" id="BC003666">
    <property type="protein sequence ID" value="AAH03666.1"/>
    <property type="molecule type" value="mRNA"/>
</dbReference>
<dbReference type="CCDS" id="CCDS8201.1">
    <molecule id="Q6IA69-1"/>
</dbReference>
<dbReference type="RefSeq" id="NP_060631.2">
    <molecule id="Q6IA69-1"/>
    <property type="nucleotide sequence ID" value="NM_018161.4"/>
</dbReference>
<dbReference type="PDB" id="6OFB">
    <property type="method" value="X-ray"/>
    <property type="resolution" value="2.84 A"/>
    <property type="chains" value="A/B=1-706"/>
</dbReference>
<dbReference type="PDBsum" id="6OFB"/>
<dbReference type="SMR" id="Q6IA69"/>
<dbReference type="BioGRID" id="120488">
    <property type="interactions" value="36"/>
</dbReference>
<dbReference type="FunCoup" id="Q6IA69">
    <property type="interactions" value="1505"/>
</dbReference>
<dbReference type="IntAct" id="Q6IA69">
    <property type="interactions" value="26"/>
</dbReference>
<dbReference type="STRING" id="9606.ENSP00000326424"/>
<dbReference type="BindingDB" id="Q6IA69"/>
<dbReference type="DrugBank" id="DB00142">
    <property type="generic name" value="Glutamic acid"/>
</dbReference>
<dbReference type="DrugBank" id="DB00130">
    <property type="generic name" value="L-Glutamine"/>
</dbReference>
<dbReference type="GlyGen" id="Q6IA69">
    <property type="glycosylation" value="1 site, 1 O-linked glycan (1 site)"/>
</dbReference>
<dbReference type="iPTMnet" id="Q6IA69"/>
<dbReference type="MetOSite" id="Q6IA69"/>
<dbReference type="PhosphoSitePlus" id="Q6IA69"/>
<dbReference type="SwissPalm" id="Q6IA69"/>
<dbReference type="BioMuta" id="NADSYN1"/>
<dbReference type="DMDM" id="257051045"/>
<dbReference type="jPOST" id="Q6IA69"/>
<dbReference type="MassIVE" id="Q6IA69"/>
<dbReference type="PaxDb" id="9606-ENSP00000326424"/>
<dbReference type="PeptideAtlas" id="Q6IA69"/>
<dbReference type="ProteomicsDB" id="3734"/>
<dbReference type="ProteomicsDB" id="66358">
    <molecule id="Q6IA69-1"/>
</dbReference>
<dbReference type="Pumba" id="Q6IA69"/>
<dbReference type="Antibodypedia" id="30728">
    <property type="antibodies" value="69 antibodies from 17 providers"/>
</dbReference>
<dbReference type="DNASU" id="55191"/>
<dbReference type="Ensembl" id="ENST00000319023.7">
    <molecule id="Q6IA69-1"/>
    <property type="protein sequence ID" value="ENSP00000326424.2"/>
    <property type="gene ID" value="ENSG00000172890.13"/>
</dbReference>
<dbReference type="GeneID" id="55191"/>
<dbReference type="KEGG" id="hsa:55191"/>
<dbReference type="MANE-Select" id="ENST00000319023.7">
    <property type="protein sequence ID" value="ENSP00000326424.2"/>
    <property type="RefSeq nucleotide sequence ID" value="NM_018161.5"/>
    <property type="RefSeq protein sequence ID" value="NP_060631.2"/>
</dbReference>
<dbReference type="UCSC" id="uc001oqn.4">
    <molecule id="Q6IA69-1"/>
    <property type="organism name" value="human"/>
</dbReference>
<dbReference type="AGR" id="HGNC:29832"/>
<dbReference type="CTD" id="55191"/>
<dbReference type="DisGeNET" id="55191"/>
<dbReference type="GeneCards" id="NADSYN1"/>
<dbReference type="GeneReviews" id="NADSYN1"/>
<dbReference type="HGNC" id="HGNC:29832">
    <property type="gene designation" value="NADSYN1"/>
</dbReference>
<dbReference type="HPA" id="ENSG00000172890">
    <property type="expression patterns" value="Low tissue specificity"/>
</dbReference>
<dbReference type="MalaCards" id="NADSYN1"/>
<dbReference type="MIM" id="608285">
    <property type="type" value="gene"/>
</dbReference>
<dbReference type="MIM" id="618845">
    <property type="type" value="phenotype"/>
</dbReference>
<dbReference type="neXtProt" id="NX_Q6IA69"/>
<dbReference type="OpenTargets" id="ENSG00000172890"/>
<dbReference type="Orphanet" id="521438">
    <property type="disease" value="Congenital vertebral-cardiac-renal anomalies syndrome"/>
</dbReference>
<dbReference type="PharmGKB" id="PA142671299"/>
<dbReference type="VEuPathDB" id="HostDB:ENSG00000172890"/>
<dbReference type="eggNOG" id="KOG2303">
    <property type="taxonomic scope" value="Eukaryota"/>
</dbReference>
<dbReference type="GeneTree" id="ENSGT00390000010152"/>
<dbReference type="HOGENOM" id="CLU_011884_2_0_1"/>
<dbReference type="InParanoid" id="Q6IA69"/>
<dbReference type="OMA" id="TSQEVCN"/>
<dbReference type="OrthoDB" id="2020662at2759"/>
<dbReference type="PAN-GO" id="Q6IA69">
    <property type="GO annotations" value="4 GO annotations based on evolutionary models"/>
</dbReference>
<dbReference type="PhylomeDB" id="Q6IA69"/>
<dbReference type="TreeFam" id="TF351426"/>
<dbReference type="BioCyc" id="MetaCyc:HS10587-MONOMER"/>
<dbReference type="BRENDA" id="6.3.5.1">
    <property type="organism ID" value="2681"/>
</dbReference>
<dbReference type="PathwayCommons" id="Q6IA69"/>
<dbReference type="Reactome" id="R-HSA-196807">
    <property type="pathway name" value="Nicotinate metabolism"/>
</dbReference>
<dbReference type="SABIO-RK" id="Q6IA69"/>
<dbReference type="SignaLink" id="Q6IA69"/>
<dbReference type="UniPathway" id="UPA00253">
    <property type="reaction ID" value="UER00334"/>
</dbReference>
<dbReference type="BioGRID-ORCS" id="55191">
    <property type="hits" value="7 hits in 1158 CRISPR screens"/>
</dbReference>
<dbReference type="ChiTaRS" id="NADSYN1">
    <property type="organism name" value="human"/>
</dbReference>
<dbReference type="GeneWiki" id="NADSYN1"/>
<dbReference type="GenomeRNAi" id="55191"/>
<dbReference type="Pharos" id="Q6IA69">
    <property type="development level" value="Tbio"/>
</dbReference>
<dbReference type="PRO" id="PR:Q6IA69"/>
<dbReference type="Proteomes" id="UP000005640">
    <property type="component" value="Chromosome 11"/>
</dbReference>
<dbReference type="RNAct" id="Q6IA69">
    <property type="molecule type" value="protein"/>
</dbReference>
<dbReference type="Bgee" id="ENSG00000172890">
    <property type="expression patterns" value="Expressed in right uterine tube and 174 other cell types or tissues"/>
</dbReference>
<dbReference type="ExpressionAtlas" id="Q6IA69">
    <property type="expression patterns" value="baseline and differential"/>
</dbReference>
<dbReference type="GO" id="GO:0005737">
    <property type="term" value="C:cytoplasm"/>
    <property type="evidence" value="ECO:0000318"/>
    <property type="project" value="GO_Central"/>
</dbReference>
<dbReference type="GO" id="GO:0005829">
    <property type="term" value="C:cytosol"/>
    <property type="evidence" value="ECO:0000304"/>
    <property type="project" value="Reactome"/>
</dbReference>
<dbReference type="GO" id="GO:0005524">
    <property type="term" value="F:ATP binding"/>
    <property type="evidence" value="ECO:0007669"/>
    <property type="project" value="UniProtKB-KW"/>
</dbReference>
<dbReference type="GO" id="GO:0004359">
    <property type="term" value="F:glutaminase activity"/>
    <property type="evidence" value="ECO:0000318"/>
    <property type="project" value="GO_Central"/>
</dbReference>
<dbReference type="GO" id="GO:0003952">
    <property type="term" value="F:NAD+ synthase (glutamine-hydrolyzing) activity"/>
    <property type="evidence" value="ECO:0000315"/>
    <property type="project" value="UniProtKB"/>
</dbReference>
<dbReference type="GO" id="GO:0034354">
    <property type="term" value="P:'de novo' NAD biosynthetic process from L-tryptophan"/>
    <property type="evidence" value="ECO:0000315"/>
    <property type="project" value="UniProtKB"/>
</dbReference>
<dbReference type="GO" id="GO:0009435">
    <property type="term" value="P:NAD biosynthetic process"/>
    <property type="evidence" value="ECO:0000318"/>
    <property type="project" value="GO_Central"/>
</dbReference>
<dbReference type="CDD" id="cd07570">
    <property type="entry name" value="GAT_Gln-NAD-synth"/>
    <property type="match status" value="1"/>
</dbReference>
<dbReference type="CDD" id="cd00553">
    <property type="entry name" value="NAD_synthase"/>
    <property type="match status" value="1"/>
</dbReference>
<dbReference type="FunFam" id="3.40.50.620:FF:000036">
    <property type="entry name" value="Glutamine-dependent NAD(+) synthetase"/>
    <property type="match status" value="1"/>
</dbReference>
<dbReference type="FunFam" id="3.60.110.10:FF:000007">
    <property type="entry name" value="Glutamine-dependent NAD(+) synthetase"/>
    <property type="match status" value="1"/>
</dbReference>
<dbReference type="Gene3D" id="3.60.110.10">
    <property type="entry name" value="Carbon-nitrogen hydrolase"/>
    <property type="match status" value="1"/>
</dbReference>
<dbReference type="Gene3D" id="3.40.50.620">
    <property type="entry name" value="HUPs"/>
    <property type="match status" value="1"/>
</dbReference>
<dbReference type="HAMAP" id="MF_02090">
    <property type="entry name" value="NadE_glutamine_dep"/>
    <property type="match status" value="1"/>
</dbReference>
<dbReference type="InterPro" id="IPR003010">
    <property type="entry name" value="C-N_Hydrolase"/>
</dbReference>
<dbReference type="InterPro" id="IPR036526">
    <property type="entry name" value="C-N_Hydrolase_sf"/>
</dbReference>
<dbReference type="InterPro" id="IPR014445">
    <property type="entry name" value="Gln-dep_NAD_synthase"/>
</dbReference>
<dbReference type="InterPro" id="IPR022310">
    <property type="entry name" value="NAD/GMP_synthase"/>
</dbReference>
<dbReference type="InterPro" id="IPR003694">
    <property type="entry name" value="NAD_synthase"/>
</dbReference>
<dbReference type="InterPro" id="IPR014729">
    <property type="entry name" value="Rossmann-like_a/b/a_fold"/>
</dbReference>
<dbReference type="NCBIfam" id="TIGR00552">
    <property type="entry name" value="nadE"/>
    <property type="match status" value="1"/>
</dbReference>
<dbReference type="PANTHER" id="PTHR23090:SF9">
    <property type="entry name" value="GLUTAMINE-DEPENDENT NAD(+) SYNTHETASE"/>
    <property type="match status" value="1"/>
</dbReference>
<dbReference type="PANTHER" id="PTHR23090">
    <property type="entry name" value="NH 3 /GLUTAMINE-DEPENDENT NAD + SYNTHETASE"/>
    <property type="match status" value="1"/>
</dbReference>
<dbReference type="Pfam" id="PF00795">
    <property type="entry name" value="CN_hydrolase"/>
    <property type="match status" value="1"/>
</dbReference>
<dbReference type="Pfam" id="PF02540">
    <property type="entry name" value="NAD_synthase"/>
    <property type="match status" value="1"/>
</dbReference>
<dbReference type="PIRSF" id="PIRSF006630">
    <property type="entry name" value="NADS_GAT"/>
    <property type="match status" value="1"/>
</dbReference>
<dbReference type="SUPFAM" id="SSF52402">
    <property type="entry name" value="Adenine nucleotide alpha hydrolases-like"/>
    <property type="match status" value="1"/>
</dbReference>
<dbReference type="SUPFAM" id="SSF56317">
    <property type="entry name" value="Carbon-nitrogen hydrolase"/>
    <property type="match status" value="1"/>
</dbReference>
<dbReference type="PROSITE" id="PS50263">
    <property type="entry name" value="CN_HYDROLASE"/>
    <property type="match status" value="1"/>
</dbReference>
<keyword id="KW-0002">3D-structure</keyword>
<keyword id="KW-0025">Alternative splicing</keyword>
<keyword id="KW-0067">ATP-binding</keyword>
<keyword id="KW-0225">Disease variant</keyword>
<keyword id="KW-0436">Ligase</keyword>
<keyword id="KW-0520">NAD</keyword>
<keyword id="KW-0547">Nucleotide-binding</keyword>
<keyword id="KW-1267">Proteomics identification</keyword>
<keyword id="KW-1185">Reference proteome</keyword>
<accession>Q6IA69</accession>
<accession>B3KUU4</accession>
<accession>Q86SN2</accession>
<accession>Q9HA25</accession>
<accession>Q9NVM8</accession>